<evidence type="ECO:0000269" key="1">
    <source>
    </source>
</evidence>
<evidence type="ECO:0000305" key="2"/>
<accession>P24769</accession>
<accession>Q76ZL9</accession>
<name>PG189_VACCW</name>
<organism>
    <name type="scientific">Vaccinia virus (strain Western Reserve)</name>
    <name type="common">VACV</name>
    <name type="synonym">Vaccinia virus (strain WR)</name>
    <dbReference type="NCBI Taxonomy" id="10254"/>
    <lineage>
        <taxon>Viruses</taxon>
        <taxon>Varidnaviria</taxon>
        <taxon>Bamfordvirae</taxon>
        <taxon>Nucleocytoviricota</taxon>
        <taxon>Pokkesviricetes</taxon>
        <taxon>Chitovirales</taxon>
        <taxon>Poxviridae</taxon>
        <taxon>Chordopoxvirinae</taxon>
        <taxon>Orthopoxvirus</taxon>
        <taxon>Vaccinia virus</taxon>
    </lineage>
</organism>
<proteinExistence type="inferred from homology"/>
<sequence>MDFFKKEILDWSIYLSLHYIARVFSNFSTSHIIQDYNLVRTYEKVDKTIVDFLSRLPNLFHILEYGENILHIYSMDDANTNIIIFFLDRVLNINKNGSFIHNLRLSSSINIKEYVYQLVNNDHPDNRIRLMLENGRRTRHFLSYISDTVNIYICILINHGFYIDAEDSYGCTLLHRCIYHYKKSESESYNELIKILLNNGSDVDKKDTYGNTPFILLCKHDINNVELFEICLENANIDSVDFNRYTPLHYVSCRNKYDFVKLLISKGANVNARNRFGTTPFYCGIIHGISLIKLYLESDTELEIDNEHIVRHLIIFDAVESLDYLLSRGVIDINYRTIYNETSIYDAVSYNAYNTLVYLLNRNGDFETITTSGCTCISEAVANNNKIIMEVLLSKRPSLKIMIQSMIAITKHKQHNADLLKMCIKYTACMTDYDTLIDVQSLQQYKWYILKCFDEIDIMKRCYIKNKTVFQLVFCIKDINTLMRYGKHPSFVKCTSLDVYGSRVRNIIASIRYRQRLISLLSKKLDPGDKWSCFPNEIKYKILENFNDNELSTYLKIL</sequence>
<organismHost>
    <name type="scientific">Bos taurus</name>
    <name type="common">Bovine</name>
    <dbReference type="NCBI Taxonomy" id="9913"/>
</organismHost>
<dbReference type="EMBL" id="D11079">
    <property type="protein sequence ID" value="BAA01834.1"/>
    <property type="molecule type" value="Genomic_DNA"/>
</dbReference>
<dbReference type="EMBL" id="M58055">
    <property type="protein sequence ID" value="AAA47965.1"/>
    <property type="molecule type" value="Genomic_DNA"/>
</dbReference>
<dbReference type="EMBL" id="AY243312">
    <property type="protein sequence ID" value="AAO89465.1"/>
    <property type="molecule type" value="Genomic_DNA"/>
</dbReference>
<dbReference type="PIR" id="JQ1798">
    <property type="entry name" value="JQ1798"/>
</dbReference>
<dbReference type="RefSeq" id="YP_233068.1">
    <property type="nucleotide sequence ID" value="NC_006998.1"/>
</dbReference>
<dbReference type="SMR" id="P24769"/>
<dbReference type="DNASU" id="3707657"/>
<dbReference type="GeneID" id="3707657"/>
<dbReference type="KEGG" id="vg:3707657"/>
<dbReference type="Proteomes" id="UP000000344">
    <property type="component" value="Genome"/>
</dbReference>
<dbReference type="Gene3D" id="1.25.40.20">
    <property type="entry name" value="Ankyrin repeat-containing domain"/>
    <property type="match status" value="3"/>
</dbReference>
<dbReference type="InterPro" id="IPR002110">
    <property type="entry name" value="Ankyrin_rpt"/>
</dbReference>
<dbReference type="InterPro" id="IPR036770">
    <property type="entry name" value="Ankyrin_rpt-contain_sf"/>
</dbReference>
<dbReference type="InterPro" id="IPR018272">
    <property type="entry name" value="PRANC_domain"/>
</dbReference>
<dbReference type="PANTHER" id="PTHR24198">
    <property type="entry name" value="ANKYRIN REPEAT AND PROTEIN KINASE DOMAIN-CONTAINING PROTEIN"/>
    <property type="match status" value="1"/>
</dbReference>
<dbReference type="PANTHER" id="PTHR24198:SF165">
    <property type="entry name" value="ANKYRIN REPEAT-CONTAINING PROTEIN-RELATED"/>
    <property type="match status" value="1"/>
</dbReference>
<dbReference type="Pfam" id="PF12796">
    <property type="entry name" value="Ank_2"/>
    <property type="match status" value="1"/>
</dbReference>
<dbReference type="Pfam" id="PF09372">
    <property type="entry name" value="PRANC"/>
    <property type="match status" value="1"/>
</dbReference>
<dbReference type="SMART" id="SM00248">
    <property type="entry name" value="ANK"/>
    <property type="match status" value="7"/>
</dbReference>
<dbReference type="SUPFAM" id="SSF48403">
    <property type="entry name" value="Ankyrin repeat"/>
    <property type="match status" value="1"/>
</dbReference>
<dbReference type="PROSITE" id="PS50297">
    <property type="entry name" value="ANK_REP_REGION"/>
    <property type="match status" value="1"/>
</dbReference>
<dbReference type="PROSITE" id="PS50088">
    <property type="entry name" value="ANK_REPEAT"/>
    <property type="match status" value="1"/>
</dbReference>
<gene>
    <name type="primary">OPG189</name>
    <name type="ordered locus">VACWR186</name>
    <name type="ORF">B4R</name>
</gene>
<protein>
    <recommendedName>
        <fullName>Ankyrin repeat protein OPG189</fullName>
    </recommendedName>
</protein>
<comment type="function">
    <text evidence="1">Contributes to viral release without involving rearrangement of host actin.</text>
</comment>
<comment type="similarity">
    <text evidence="2">Belongs to the orthopoxvirus OPG189 protein family.</text>
</comment>
<keyword id="KW-0040">ANK repeat</keyword>
<keyword id="KW-0426">Late protein</keyword>
<keyword id="KW-1185">Reference proteome</keyword>
<keyword id="KW-0677">Repeat</keyword>
<reference key="1">
    <citation type="journal article" date="1991" name="J. Gen. Virol.">
        <title>Nucleotide sequence of 42 kbp of vaccinia virus strain WR from near the right inverted terminal repeat.</title>
        <authorList>
            <person name="Smith G.L."/>
            <person name="Chan Y.S."/>
            <person name="Howard S.T."/>
        </authorList>
    </citation>
    <scope>NUCLEOTIDE SEQUENCE [GENOMIC DNA]</scope>
</reference>
<reference key="2">
    <citation type="journal article" date="1991" name="Virology">
        <title>Vaccinia virus homologues of the Shope fibroma virus inverted terminal repeat proteins and a discontinuous ORF related to the tumor necrosis factor receptor family.</title>
        <authorList>
            <person name="Howard S.T."/>
            <person name="Chan Y.S."/>
            <person name="Smith G.L."/>
        </authorList>
    </citation>
    <scope>NUCLEOTIDE SEQUENCE [GENOMIC DNA]</scope>
</reference>
<reference key="3">
    <citation type="submission" date="2003-02" db="EMBL/GenBank/DDBJ databases">
        <title>Sequencing of the coding region of Vaccinia-WR to an average 9-fold redundancy and an error rate of 0.16/10kb.</title>
        <authorList>
            <person name="Esposito J.J."/>
            <person name="Frace A.M."/>
            <person name="Sammons S.A."/>
            <person name="Olsen-Rasmussen M."/>
            <person name="Osborne J."/>
            <person name="Wohlhueter R."/>
        </authorList>
    </citation>
    <scope>NUCLEOTIDE SEQUENCE [LARGE SCALE GENOMIC DNA]</scope>
</reference>
<reference key="4">
    <citation type="journal article" date="2014" name="Virology">
        <title>Initial characterization of vaccinia virus B4 suggests a role in virus spread.</title>
        <authorList>
            <person name="Burles K."/>
            <person name="Irwin C.R."/>
            <person name="Burton R.L."/>
            <person name="Schriewer J."/>
            <person name="Evans D.H."/>
            <person name="Buller R.M."/>
            <person name="Barry M."/>
        </authorList>
    </citation>
    <scope>FUNCTION</scope>
</reference>
<feature type="chain" id="PRO_0000067085" description="Ankyrin repeat protein OPG189">
    <location>
        <begin position="1"/>
        <end position="558"/>
    </location>
</feature>
<feature type="repeat" description="ANK 1">
    <location>
        <begin position="65"/>
        <end position="95"/>
    </location>
</feature>
<feature type="repeat" description="ANK 2">
    <location>
        <begin position="169"/>
        <end position="205"/>
    </location>
</feature>
<feature type="repeat" description="ANK 3">
    <location>
        <begin position="209"/>
        <end position="239"/>
    </location>
</feature>
<feature type="repeat" description="ANK 4">
    <location>
        <begin position="243"/>
        <end position="272"/>
    </location>
</feature>
<feature type="repeat" description="ANK 5">
    <location>
        <begin position="276"/>
        <end position="304"/>
    </location>
</feature>
<feature type="repeat" description="ANK 6">
    <location>
        <begin position="339"/>
        <end position="368"/>
    </location>
</feature>
<feature type="repeat" description="ANK 7">
    <location>
        <begin position="372"/>
        <end position="401"/>
    </location>
</feature>